<proteinExistence type="evidence at transcript level"/>
<dbReference type="EMBL" id="CR859165">
    <property type="protein sequence ID" value="CAH91354.1"/>
    <property type="molecule type" value="mRNA"/>
</dbReference>
<dbReference type="RefSeq" id="NP_001125798.1">
    <property type="nucleotide sequence ID" value="NM_001132326.2"/>
</dbReference>
<dbReference type="SMR" id="P0CB91"/>
<dbReference type="FunCoup" id="P0CB91">
    <property type="interactions" value="1536"/>
</dbReference>
<dbReference type="STRING" id="9601.ENSPPYP00000022282"/>
<dbReference type="Ensembl" id="ENSPPYT00000043806.1">
    <property type="protein sequence ID" value="ENSPPYP00000027772.1"/>
    <property type="gene ID" value="ENSPPYG00000038544.1"/>
</dbReference>
<dbReference type="GeneID" id="100172726"/>
<dbReference type="KEGG" id="pon:100172726"/>
<dbReference type="CTD" id="4702"/>
<dbReference type="eggNOG" id="KOG3458">
    <property type="taxonomic scope" value="Eukaryota"/>
</dbReference>
<dbReference type="GeneTree" id="ENSGT00390000008938"/>
<dbReference type="InParanoid" id="P0CB91"/>
<dbReference type="OMA" id="FRTHWQC"/>
<dbReference type="OrthoDB" id="276296at2759"/>
<dbReference type="Proteomes" id="UP000001595">
    <property type="component" value="Chromosome 9"/>
</dbReference>
<dbReference type="GO" id="GO:0005743">
    <property type="term" value="C:mitochondrial inner membrane"/>
    <property type="evidence" value="ECO:0007669"/>
    <property type="project" value="UniProtKB-SubCell"/>
</dbReference>
<dbReference type="GO" id="GO:0005758">
    <property type="term" value="C:mitochondrial intermembrane space"/>
    <property type="evidence" value="ECO:0007669"/>
    <property type="project" value="UniProtKB-SubCell"/>
</dbReference>
<dbReference type="GO" id="GO:0005739">
    <property type="term" value="C:mitochondrion"/>
    <property type="evidence" value="ECO:0000250"/>
    <property type="project" value="UniProtKB"/>
</dbReference>
<dbReference type="GO" id="GO:0045271">
    <property type="term" value="C:respiratory chain complex I"/>
    <property type="evidence" value="ECO:0000250"/>
    <property type="project" value="UniProtKB"/>
</dbReference>
<dbReference type="GO" id="GO:0044877">
    <property type="term" value="F:protein-containing complex binding"/>
    <property type="evidence" value="ECO:0007669"/>
    <property type="project" value="Ensembl"/>
</dbReference>
<dbReference type="GO" id="GO:0006120">
    <property type="term" value="P:mitochondrial electron transport, NADH to ubiquinone"/>
    <property type="evidence" value="ECO:0007669"/>
    <property type="project" value="InterPro"/>
</dbReference>
<dbReference type="InterPro" id="IPR010625">
    <property type="entry name" value="CHCH"/>
</dbReference>
<dbReference type="InterPro" id="IPR016680">
    <property type="entry name" value="NDUFA8"/>
</dbReference>
<dbReference type="PANTHER" id="PTHR13344:SF0">
    <property type="entry name" value="NADH DEHYDROGENASE [UBIQUINONE] 1 ALPHA SUBCOMPLEX SUBUNIT 8"/>
    <property type="match status" value="1"/>
</dbReference>
<dbReference type="PANTHER" id="PTHR13344">
    <property type="entry name" value="NADH-UBIQUINONE OXIDOREDUCTASE"/>
    <property type="match status" value="1"/>
</dbReference>
<dbReference type="Pfam" id="PF06747">
    <property type="entry name" value="CHCH"/>
    <property type="match status" value="1"/>
</dbReference>
<dbReference type="PIRSF" id="PIRSF017016">
    <property type="entry name" value="NDUA8"/>
    <property type="match status" value="1"/>
</dbReference>
<dbReference type="PROSITE" id="PS51808">
    <property type="entry name" value="CHCH"/>
    <property type="match status" value="2"/>
</dbReference>
<evidence type="ECO:0000250" key="1">
    <source>
        <dbReference type="UniProtKB" id="P51970"/>
    </source>
</evidence>
<evidence type="ECO:0000255" key="2">
    <source>
        <dbReference type="PROSITE-ProRule" id="PRU01150"/>
    </source>
</evidence>
<evidence type="ECO:0000256" key="3">
    <source>
        <dbReference type="SAM" id="MobiDB-lite"/>
    </source>
</evidence>
<evidence type="ECO:0000305" key="4"/>
<comment type="function">
    <text evidence="1">Accessory subunit of the mitochondrial membrane respiratory chain NADH dehydrogenase (Complex I), that is believed not to be involved in catalysis. Complex I functions in the transfer of electrons from NADH to the respiratory chain. The immediate electron acceptor for the enzyme is believed to be ubiquinone.</text>
</comment>
<comment type="subunit">
    <text evidence="1">Complex I is composed of 45 different subunits.</text>
</comment>
<comment type="subcellular location">
    <subcellularLocation>
        <location evidence="1">Mitochondrion inner membrane</location>
        <topology evidence="1">Peripheral membrane protein</topology>
    </subcellularLocation>
    <subcellularLocation>
        <location evidence="1">Mitochondrion intermembrane space</location>
    </subcellularLocation>
    <subcellularLocation>
        <location evidence="1">Mitochondrion</location>
    </subcellularLocation>
</comment>
<comment type="domain">
    <text evidence="1">Contains four C-X9-C motifs that are predicted to form a helix-coil-helix structure, permitting the formation of intramolecular disulfide bonds.</text>
</comment>
<comment type="similarity">
    <text evidence="4">Belongs to the complex I NDUFA8 subunit family.</text>
</comment>
<protein>
    <recommendedName>
        <fullName>NADH dehydrogenase [ubiquinone] 1 alpha subcomplex subunit 8</fullName>
    </recommendedName>
    <alternativeName>
        <fullName>Complex I-19kD</fullName>
        <shortName>CI-19kD</shortName>
    </alternativeName>
    <alternativeName>
        <fullName>NADH-ubiquinone oxidoreductase 19 kDa subunit</fullName>
    </alternativeName>
</protein>
<sequence length="172" mass="20135">MPGIVELPTLEELKVDEVKISSAVLKAAAHHYGAQCDKPNKEFMLCRWEEKDPRRCLEEGKLVNKCALDFFRQIKRHCAEPFTEYWTCIDYTGQQLFRHCRKQQAKFDECVLDKMGWVRPDLGELSKVTKVKTDRPLPENPYHSRPRPDPSPEIEGDLKPAIHGSRFYFWTK</sequence>
<accession>P0CB91</accession>
<accession>Q5RA56</accession>
<gene>
    <name type="primary">NDUFA8</name>
</gene>
<organism>
    <name type="scientific">Pongo abelii</name>
    <name type="common">Sumatran orangutan</name>
    <name type="synonym">Pongo pygmaeus abelii</name>
    <dbReference type="NCBI Taxonomy" id="9601"/>
    <lineage>
        <taxon>Eukaryota</taxon>
        <taxon>Metazoa</taxon>
        <taxon>Chordata</taxon>
        <taxon>Craniata</taxon>
        <taxon>Vertebrata</taxon>
        <taxon>Euteleostomi</taxon>
        <taxon>Mammalia</taxon>
        <taxon>Eutheria</taxon>
        <taxon>Euarchontoglires</taxon>
        <taxon>Primates</taxon>
        <taxon>Haplorrhini</taxon>
        <taxon>Catarrhini</taxon>
        <taxon>Hominidae</taxon>
        <taxon>Pongo</taxon>
    </lineage>
</organism>
<feature type="chain" id="PRO_0000250707" description="NADH dehydrogenase [ubiquinone] 1 alpha subcomplex subunit 8">
    <location>
        <begin position="1"/>
        <end position="172"/>
    </location>
</feature>
<feature type="domain" description="CHCH 1" evidence="2">
    <location>
        <begin position="33"/>
        <end position="74"/>
    </location>
</feature>
<feature type="domain" description="CHCH 2" evidence="2">
    <location>
        <begin position="75"/>
        <end position="118"/>
    </location>
</feature>
<feature type="region of interest" description="Disordered" evidence="3">
    <location>
        <begin position="133"/>
        <end position="159"/>
    </location>
</feature>
<feature type="short sequence motif" description="Cx9C motif 1" evidence="2">
    <location>
        <begin position="36"/>
        <end position="46"/>
    </location>
</feature>
<feature type="short sequence motif" description="Cx9C motif 2" evidence="2">
    <location>
        <begin position="56"/>
        <end position="66"/>
    </location>
</feature>
<feature type="short sequence motif" description="Cx9C motif 3" evidence="2">
    <location>
        <begin position="78"/>
        <end position="88"/>
    </location>
</feature>
<feature type="short sequence motif" description="Cx9C motif 4" evidence="2">
    <location>
        <begin position="100"/>
        <end position="110"/>
    </location>
</feature>
<feature type="compositionally biased region" description="Basic and acidic residues" evidence="3">
    <location>
        <begin position="146"/>
        <end position="159"/>
    </location>
</feature>
<feature type="disulfide bond" evidence="2">
    <location>
        <begin position="36"/>
        <end position="66"/>
    </location>
</feature>
<feature type="disulfide bond" evidence="2">
    <location>
        <begin position="46"/>
        <end position="56"/>
    </location>
</feature>
<feature type="disulfide bond" evidence="2">
    <location>
        <begin position="78"/>
        <end position="110"/>
    </location>
</feature>
<feature type="disulfide bond" evidence="2">
    <location>
        <begin position="88"/>
        <end position="100"/>
    </location>
</feature>
<reference key="1">
    <citation type="submission" date="2004-11" db="EMBL/GenBank/DDBJ databases">
        <authorList>
            <consortium name="The German cDNA consortium"/>
        </authorList>
    </citation>
    <scope>NUCLEOTIDE SEQUENCE [LARGE SCALE MRNA]</scope>
    <source>
        <tissue>Heart</tissue>
    </source>
</reference>
<name>NDUA8_PONAB</name>
<keyword id="KW-1015">Disulfide bond</keyword>
<keyword id="KW-0249">Electron transport</keyword>
<keyword id="KW-0472">Membrane</keyword>
<keyword id="KW-0496">Mitochondrion</keyword>
<keyword id="KW-0999">Mitochondrion inner membrane</keyword>
<keyword id="KW-1185">Reference proteome</keyword>
<keyword id="KW-0677">Repeat</keyword>
<keyword id="KW-0679">Respiratory chain</keyword>
<keyword id="KW-0813">Transport</keyword>